<feature type="chain" id="PRO_0000203877" description="DNA-binding protein Fis">
    <location>
        <begin position="1"/>
        <end position="99"/>
    </location>
</feature>
<feature type="DNA-binding region" description="H-T-H motif" evidence="1">
    <location>
        <begin position="75"/>
        <end position="94"/>
    </location>
</feature>
<proteinExistence type="inferred from homology"/>
<reference key="1">
    <citation type="journal article" date="2002" name="Science">
        <title>50 million years of genomic stasis in endosymbiotic bacteria.</title>
        <authorList>
            <person name="Tamas I."/>
            <person name="Klasson L."/>
            <person name="Canbaeck B."/>
            <person name="Naeslund A.K."/>
            <person name="Eriksson A.-S."/>
            <person name="Wernegreen J.J."/>
            <person name="Sandstroem J.P."/>
            <person name="Moran N.A."/>
            <person name="Andersson S.G.E."/>
        </authorList>
    </citation>
    <scope>NUCLEOTIDE SEQUENCE [LARGE SCALE GENOMIC DNA]</scope>
    <source>
        <strain>Sg</strain>
    </source>
</reference>
<name>FIS_BUCAP</name>
<keyword id="KW-0010">Activator</keyword>
<keyword id="KW-0238">DNA-binding</keyword>
<keyword id="KW-0804">Transcription</keyword>
<keyword id="KW-0805">Transcription regulation</keyword>
<protein>
    <recommendedName>
        <fullName evidence="1">DNA-binding protein Fis</fullName>
    </recommendedName>
</protein>
<sequence length="99" mass="11497">MSEESMDTGFLVINTKDKQDKTVKKPLRILIKKSLENYFLHLDKSQCVSNLYQLVLSELEQPLLDIIMQHTRGNQTRAASIMGINRSTLRKKLKRYGMN</sequence>
<evidence type="ECO:0000255" key="1">
    <source>
        <dbReference type="HAMAP-Rule" id="MF_00166"/>
    </source>
</evidence>
<organism>
    <name type="scientific">Buchnera aphidicola subsp. Schizaphis graminum (strain Sg)</name>
    <dbReference type="NCBI Taxonomy" id="198804"/>
    <lineage>
        <taxon>Bacteria</taxon>
        <taxon>Pseudomonadati</taxon>
        <taxon>Pseudomonadota</taxon>
        <taxon>Gammaproteobacteria</taxon>
        <taxon>Enterobacterales</taxon>
        <taxon>Erwiniaceae</taxon>
        <taxon>Buchnera</taxon>
    </lineage>
</organism>
<dbReference type="EMBL" id="AE013218">
    <property type="protein sequence ID" value="AAM67939.1"/>
    <property type="molecule type" value="Genomic_DNA"/>
</dbReference>
<dbReference type="RefSeq" id="WP_011053906.1">
    <property type="nucleotide sequence ID" value="NC_004061.1"/>
</dbReference>
<dbReference type="SMR" id="Q8K9F0"/>
<dbReference type="STRING" id="198804.BUsg_387"/>
<dbReference type="GeneID" id="93003856"/>
<dbReference type="KEGG" id="bas:BUsg_387"/>
<dbReference type="eggNOG" id="COG2901">
    <property type="taxonomic scope" value="Bacteria"/>
</dbReference>
<dbReference type="HOGENOM" id="CLU_158040_3_0_6"/>
<dbReference type="Proteomes" id="UP000000416">
    <property type="component" value="Chromosome"/>
</dbReference>
<dbReference type="GO" id="GO:0003700">
    <property type="term" value="F:DNA-binding transcription factor activity"/>
    <property type="evidence" value="ECO:0007669"/>
    <property type="project" value="UniProtKB-UniRule"/>
</dbReference>
<dbReference type="GO" id="GO:0043565">
    <property type="term" value="F:sequence-specific DNA binding"/>
    <property type="evidence" value="ECO:0007669"/>
    <property type="project" value="InterPro"/>
</dbReference>
<dbReference type="Gene3D" id="1.10.10.60">
    <property type="entry name" value="Homeodomain-like"/>
    <property type="match status" value="1"/>
</dbReference>
<dbReference type="HAMAP" id="MF_00166">
    <property type="entry name" value="DNA_binding_Fis"/>
    <property type="match status" value="1"/>
</dbReference>
<dbReference type="InterPro" id="IPR005412">
    <property type="entry name" value="Fis_DNA-bd"/>
</dbReference>
<dbReference type="InterPro" id="IPR009057">
    <property type="entry name" value="Homeodomain-like_sf"/>
</dbReference>
<dbReference type="InterPro" id="IPR002197">
    <property type="entry name" value="HTH_Fis"/>
</dbReference>
<dbReference type="InterPro" id="IPR050207">
    <property type="entry name" value="Trans_regulatory_Fis"/>
</dbReference>
<dbReference type="NCBIfam" id="NF001659">
    <property type="entry name" value="PRK00430.1"/>
    <property type="match status" value="1"/>
</dbReference>
<dbReference type="PANTHER" id="PTHR47918">
    <property type="entry name" value="DNA-BINDING PROTEIN FIS"/>
    <property type="match status" value="1"/>
</dbReference>
<dbReference type="PANTHER" id="PTHR47918:SF1">
    <property type="entry name" value="DNA-BINDING PROTEIN FIS"/>
    <property type="match status" value="1"/>
</dbReference>
<dbReference type="Pfam" id="PF02954">
    <property type="entry name" value="HTH_8"/>
    <property type="match status" value="1"/>
</dbReference>
<dbReference type="PIRSF" id="PIRSF002097">
    <property type="entry name" value="DNA-binding_Fis"/>
    <property type="match status" value="1"/>
</dbReference>
<dbReference type="PRINTS" id="PR01591">
    <property type="entry name" value="DNABINDNGFIS"/>
</dbReference>
<dbReference type="PRINTS" id="PR01590">
    <property type="entry name" value="HTHFIS"/>
</dbReference>
<dbReference type="SUPFAM" id="SSF46689">
    <property type="entry name" value="Homeodomain-like"/>
    <property type="match status" value="1"/>
</dbReference>
<accession>Q8K9F0</accession>
<comment type="function">
    <text evidence="1">Activates ribosomal RNA transcription. Plays a direct role in upstream activation of rRNA promoters.</text>
</comment>
<comment type="subunit">
    <text evidence="1">Homodimer.</text>
</comment>
<comment type="similarity">
    <text evidence="1">Belongs to the transcriptional regulatory Fis family.</text>
</comment>
<gene>
    <name evidence="1" type="primary">fis</name>
    <name type="ordered locus">BUsg_387</name>
</gene>